<name>AMPA_CHRSD</name>
<organism>
    <name type="scientific">Chromohalobacter salexigens (strain ATCC BAA-138 / DSM 3043 / CIP 106854 / NCIMB 13768 / 1H11)</name>
    <dbReference type="NCBI Taxonomy" id="290398"/>
    <lineage>
        <taxon>Bacteria</taxon>
        <taxon>Pseudomonadati</taxon>
        <taxon>Pseudomonadota</taxon>
        <taxon>Gammaproteobacteria</taxon>
        <taxon>Oceanospirillales</taxon>
        <taxon>Halomonadaceae</taxon>
        <taxon>Chromohalobacter</taxon>
    </lineage>
</organism>
<accession>Q1QTE5</accession>
<reference key="1">
    <citation type="journal article" date="2011" name="Stand. Genomic Sci.">
        <title>Complete genome sequence of the halophilic and highly halotolerant Chromohalobacter salexigens type strain (1H11(T)).</title>
        <authorList>
            <person name="Copeland A."/>
            <person name="O'Connor K."/>
            <person name="Lucas S."/>
            <person name="Lapidus A."/>
            <person name="Berry K.W."/>
            <person name="Detter J.C."/>
            <person name="Del Rio T.G."/>
            <person name="Hammon N."/>
            <person name="Dalin E."/>
            <person name="Tice H."/>
            <person name="Pitluck S."/>
            <person name="Bruce D."/>
            <person name="Goodwin L."/>
            <person name="Han C."/>
            <person name="Tapia R."/>
            <person name="Saunders E."/>
            <person name="Schmutz J."/>
            <person name="Brettin T."/>
            <person name="Larimer F."/>
            <person name="Land M."/>
            <person name="Hauser L."/>
            <person name="Vargas C."/>
            <person name="Nieto J.J."/>
            <person name="Kyrpides N.C."/>
            <person name="Ivanova N."/>
            <person name="Goker M."/>
            <person name="Klenk H.P."/>
            <person name="Csonka L.N."/>
            <person name="Woyke T."/>
        </authorList>
    </citation>
    <scope>NUCLEOTIDE SEQUENCE [LARGE SCALE GENOMIC DNA]</scope>
    <source>
        <strain>ATCC BAA-138 / DSM 3043 / CIP 106854 / NCIMB 13768 / 1H11</strain>
    </source>
</reference>
<gene>
    <name evidence="1" type="primary">pepA</name>
    <name type="ordered locus">Csal_2918</name>
</gene>
<sequence length="507" mass="53426">MEFPVLTVNPAKIETACLVVPVFKDGDLLPAADKLDDASERLIGQLLDRGDFEPSLGNVQLIPFAPGLGAERLLLVGLGERAKCGESQLIKALDAAFGAIAKLPLDDVAATFTDVPVGERDTAWKARVTLEAAHRACYRFDEFKSEPAPAPRLSSLTLLVGDEDQAAQAELGARVGAAVGEGVSLTRTLGNLPGNVCTPRYLADQAQRLADGADGALNVEILDEDALEALGANALLAVGQGSAEPSRLIVMEYRGAEDPEEAPHILVGKGITFDSGGISLKPGAGMDEMKFDMCGAASVFGTMKTVLGLKPRINVIGVVASAENMPDGRAIKPGDIVKTLKGLNVEILNTDAEGRMVLCDALSYVERFKPASVVDIATLTGAAIIALGHHASGLLSNDDDLALDLLDAGENAWDRAWHLPLWDEYQSQLDSNFADLAHIGGRPAGTITAACFLSRFADAYPWAHLDIAGTAWASGDKKGASGRPVGLLTQYLLDRETEAAETRPSVE</sequence>
<comment type="function">
    <text evidence="1">Presumably involved in the processing and regular turnover of intracellular proteins. Catalyzes the removal of unsubstituted N-terminal amino acids from various peptides.</text>
</comment>
<comment type="catalytic activity">
    <reaction evidence="1">
        <text>Release of an N-terminal amino acid, Xaa-|-Yaa-, in which Xaa is preferably Leu, but may be other amino acids including Pro although not Arg or Lys, and Yaa may be Pro. Amino acid amides and methyl esters are also readily hydrolyzed, but rates on arylamides are exceedingly low.</text>
        <dbReference type="EC" id="3.4.11.1"/>
    </reaction>
</comment>
<comment type="catalytic activity">
    <reaction evidence="1">
        <text>Release of an N-terminal amino acid, preferentially leucine, but not glutamic or aspartic acids.</text>
        <dbReference type="EC" id="3.4.11.10"/>
    </reaction>
</comment>
<comment type="cofactor">
    <cofactor evidence="1">
        <name>Mn(2+)</name>
        <dbReference type="ChEBI" id="CHEBI:29035"/>
    </cofactor>
    <text evidence="1">Binds 2 manganese ions per subunit.</text>
</comment>
<comment type="subcellular location">
    <subcellularLocation>
        <location evidence="1">Cytoplasm</location>
    </subcellularLocation>
</comment>
<comment type="similarity">
    <text evidence="1">Belongs to the peptidase M17 family.</text>
</comment>
<feature type="chain" id="PRO_1000019907" description="Probable cytosol aminopeptidase">
    <location>
        <begin position="1"/>
        <end position="507"/>
    </location>
</feature>
<feature type="active site" evidence="1">
    <location>
        <position position="281"/>
    </location>
</feature>
<feature type="active site" evidence="1">
    <location>
        <position position="355"/>
    </location>
</feature>
<feature type="binding site" evidence="1">
    <location>
        <position position="269"/>
    </location>
    <ligand>
        <name>Mn(2+)</name>
        <dbReference type="ChEBI" id="CHEBI:29035"/>
        <label>2</label>
    </ligand>
</feature>
<feature type="binding site" evidence="1">
    <location>
        <position position="274"/>
    </location>
    <ligand>
        <name>Mn(2+)</name>
        <dbReference type="ChEBI" id="CHEBI:29035"/>
        <label>1</label>
    </ligand>
</feature>
<feature type="binding site" evidence="1">
    <location>
        <position position="274"/>
    </location>
    <ligand>
        <name>Mn(2+)</name>
        <dbReference type="ChEBI" id="CHEBI:29035"/>
        <label>2</label>
    </ligand>
</feature>
<feature type="binding site" evidence="1">
    <location>
        <position position="292"/>
    </location>
    <ligand>
        <name>Mn(2+)</name>
        <dbReference type="ChEBI" id="CHEBI:29035"/>
        <label>2</label>
    </ligand>
</feature>
<feature type="binding site" evidence="1">
    <location>
        <position position="351"/>
    </location>
    <ligand>
        <name>Mn(2+)</name>
        <dbReference type="ChEBI" id="CHEBI:29035"/>
        <label>1</label>
    </ligand>
</feature>
<feature type="binding site" evidence="1">
    <location>
        <position position="353"/>
    </location>
    <ligand>
        <name>Mn(2+)</name>
        <dbReference type="ChEBI" id="CHEBI:29035"/>
        <label>1</label>
    </ligand>
</feature>
<feature type="binding site" evidence="1">
    <location>
        <position position="353"/>
    </location>
    <ligand>
        <name>Mn(2+)</name>
        <dbReference type="ChEBI" id="CHEBI:29035"/>
        <label>2</label>
    </ligand>
</feature>
<proteinExistence type="inferred from homology"/>
<dbReference type="EC" id="3.4.11.1" evidence="1"/>
<dbReference type="EC" id="3.4.11.10" evidence="1"/>
<dbReference type="EMBL" id="CP000285">
    <property type="protein sequence ID" value="ABE60263.1"/>
    <property type="molecule type" value="Genomic_DNA"/>
</dbReference>
<dbReference type="RefSeq" id="WP_011508209.1">
    <property type="nucleotide sequence ID" value="NC_007963.1"/>
</dbReference>
<dbReference type="SMR" id="Q1QTE5"/>
<dbReference type="STRING" id="290398.Csal_2918"/>
<dbReference type="MEROPS" id="M17.003"/>
<dbReference type="GeneID" id="95335608"/>
<dbReference type="KEGG" id="csa:Csal_2918"/>
<dbReference type="eggNOG" id="COG0260">
    <property type="taxonomic scope" value="Bacteria"/>
</dbReference>
<dbReference type="HOGENOM" id="CLU_013734_2_2_6"/>
<dbReference type="OrthoDB" id="9809354at2"/>
<dbReference type="Proteomes" id="UP000000239">
    <property type="component" value="Chromosome"/>
</dbReference>
<dbReference type="GO" id="GO:0005737">
    <property type="term" value="C:cytoplasm"/>
    <property type="evidence" value="ECO:0007669"/>
    <property type="project" value="UniProtKB-SubCell"/>
</dbReference>
<dbReference type="GO" id="GO:0030145">
    <property type="term" value="F:manganese ion binding"/>
    <property type="evidence" value="ECO:0007669"/>
    <property type="project" value="UniProtKB-UniRule"/>
</dbReference>
<dbReference type="GO" id="GO:0070006">
    <property type="term" value="F:metalloaminopeptidase activity"/>
    <property type="evidence" value="ECO:0007669"/>
    <property type="project" value="InterPro"/>
</dbReference>
<dbReference type="GO" id="GO:0006508">
    <property type="term" value="P:proteolysis"/>
    <property type="evidence" value="ECO:0007669"/>
    <property type="project" value="UniProtKB-KW"/>
</dbReference>
<dbReference type="CDD" id="cd00433">
    <property type="entry name" value="Peptidase_M17"/>
    <property type="match status" value="1"/>
</dbReference>
<dbReference type="FunFam" id="3.40.630.10:FF:000004">
    <property type="entry name" value="Probable cytosol aminopeptidase"/>
    <property type="match status" value="1"/>
</dbReference>
<dbReference type="Gene3D" id="3.40.220.10">
    <property type="entry name" value="Leucine Aminopeptidase, subunit E, domain 1"/>
    <property type="match status" value="1"/>
</dbReference>
<dbReference type="Gene3D" id="3.40.630.10">
    <property type="entry name" value="Zn peptidases"/>
    <property type="match status" value="1"/>
</dbReference>
<dbReference type="HAMAP" id="MF_00181">
    <property type="entry name" value="Cytosol_peptidase_M17"/>
    <property type="match status" value="1"/>
</dbReference>
<dbReference type="InterPro" id="IPR011356">
    <property type="entry name" value="Leucine_aapep/pepB"/>
</dbReference>
<dbReference type="InterPro" id="IPR043472">
    <property type="entry name" value="Macro_dom-like"/>
</dbReference>
<dbReference type="InterPro" id="IPR000819">
    <property type="entry name" value="Peptidase_M17_C"/>
</dbReference>
<dbReference type="InterPro" id="IPR023042">
    <property type="entry name" value="Peptidase_M17_leu_NH2_pept"/>
</dbReference>
<dbReference type="InterPro" id="IPR008283">
    <property type="entry name" value="Peptidase_M17_N"/>
</dbReference>
<dbReference type="NCBIfam" id="NF002074">
    <property type="entry name" value="PRK00913.1-4"/>
    <property type="match status" value="1"/>
</dbReference>
<dbReference type="NCBIfam" id="NF002077">
    <property type="entry name" value="PRK00913.2-4"/>
    <property type="match status" value="1"/>
</dbReference>
<dbReference type="PANTHER" id="PTHR11963:SF23">
    <property type="entry name" value="CYTOSOL AMINOPEPTIDASE"/>
    <property type="match status" value="1"/>
</dbReference>
<dbReference type="PANTHER" id="PTHR11963">
    <property type="entry name" value="LEUCINE AMINOPEPTIDASE-RELATED"/>
    <property type="match status" value="1"/>
</dbReference>
<dbReference type="Pfam" id="PF00883">
    <property type="entry name" value="Peptidase_M17"/>
    <property type="match status" value="1"/>
</dbReference>
<dbReference type="Pfam" id="PF02789">
    <property type="entry name" value="Peptidase_M17_N"/>
    <property type="match status" value="1"/>
</dbReference>
<dbReference type="PRINTS" id="PR00481">
    <property type="entry name" value="LAMNOPPTDASE"/>
</dbReference>
<dbReference type="SUPFAM" id="SSF52949">
    <property type="entry name" value="Macro domain-like"/>
    <property type="match status" value="1"/>
</dbReference>
<dbReference type="SUPFAM" id="SSF53187">
    <property type="entry name" value="Zn-dependent exopeptidases"/>
    <property type="match status" value="1"/>
</dbReference>
<dbReference type="PROSITE" id="PS00631">
    <property type="entry name" value="CYTOSOL_AP"/>
    <property type="match status" value="1"/>
</dbReference>
<evidence type="ECO:0000255" key="1">
    <source>
        <dbReference type="HAMAP-Rule" id="MF_00181"/>
    </source>
</evidence>
<protein>
    <recommendedName>
        <fullName evidence="1">Probable cytosol aminopeptidase</fullName>
        <ecNumber evidence="1">3.4.11.1</ecNumber>
    </recommendedName>
    <alternativeName>
        <fullName evidence="1">Leucine aminopeptidase</fullName>
        <shortName evidence="1">LAP</shortName>
        <ecNumber evidence="1">3.4.11.10</ecNumber>
    </alternativeName>
    <alternativeName>
        <fullName evidence="1">Leucyl aminopeptidase</fullName>
    </alternativeName>
</protein>
<keyword id="KW-0031">Aminopeptidase</keyword>
<keyword id="KW-0963">Cytoplasm</keyword>
<keyword id="KW-0378">Hydrolase</keyword>
<keyword id="KW-0464">Manganese</keyword>
<keyword id="KW-0479">Metal-binding</keyword>
<keyword id="KW-0645">Protease</keyword>
<keyword id="KW-1185">Reference proteome</keyword>